<feature type="signal peptide" evidence="2">
    <location>
        <begin position="1"/>
        <end position="18"/>
    </location>
</feature>
<feature type="propeptide" id="PRO_0000003196" evidence="1">
    <location>
        <begin position="19"/>
        <end position="43"/>
    </location>
</feature>
<feature type="peptide" id="PRO_0000003197" description="Maximin-6">
    <location>
        <begin position="44"/>
        <end position="70"/>
    </location>
</feature>
<feature type="propeptide" id="PRO_0000003198" evidence="1">
    <location>
        <begin position="74"/>
        <end position="123"/>
    </location>
</feature>
<feature type="peptide" id="PRO_0000003199" description="Maximin-Hv">
    <location>
        <begin position="124"/>
        <end position="143"/>
    </location>
</feature>
<feature type="modified residue" description="Asparagine amide" evidence="1">
    <location>
        <position position="70"/>
    </location>
</feature>
<feature type="modified residue" description="Isoleucine amide" evidence="1">
    <location>
        <position position="143"/>
    </location>
</feature>
<evidence type="ECO:0000250" key="1"/>
<evidence type="ECO:0000255" key="2"/>
<evidence type="ECO:0000305" key="3"/>
<name>M6HV_BOMMX</name>
<organism>
    <name type="scientific">Bombina maxima</name>
    <name type="common">Giant fire-bellied toad</name>
    <name type="synonym">Chinese red belly toad</name>
    <dbReference type="NCBI Taxonomy" id="161274"/>
    <lineage>
        <taxon>Eukaryota</taxon>
        <taxon>Metazoa</taxon>
        <taxon>Chordata</taxon>
        <taxon>Craniata</taxon>
        <taxon>Vertebrata</taxon>
        <taxon>Euteleostomi</taxon>
        <taxon>Amphibia</taxon>
        <taxon>Batrachia</taxon>
        <taxon>Anura</taxon>
        <taxon>Bombinatoridae</taxon>
        <taxon>Bombina</taxon>
    </lineage>
</organism>
<sequence>MNFKYIVAVSFLIASGYARSEENDVQSLSQREVLEEETLREIRGIGGALLSAGKSALKGLAKGLAEHFANGKRTAKGHEVMKRLEAVMRDLDSLDHPEEASERETRGFNQEEIANLFTKKEKRILGPVLSLVGSALGGLIKKIG</sequence>
<proteinExistence type="evidence at transcript level"/>
<reference key="1">
    <citation type="journal article" date="2005" name="Eur. J. Immunol.">
        <title>Variety of antimicrobial peptides in the Bombina maxima toad and evidence of their rapid diversification.</title>
        <authorList>
            <person name="Lee W.-H."/>
            <person name="Li Y."/>
            <person name="Lai R."/>
            <person name="Li S."/>
            <person name="Zhang Y."/>
            <person name="Wang W."/>
        </authorList>
    </citation>
    <scope>NUCLEOTIDE SEQUENCE [GENOMIC DNA]</scope>
    <source>
        <tissue>Liver</tissue>
    </source>
</reference>
<keyword id="KW-0027">Amidation</keyword>
<keyword id="KW-0878">Amphibian defense peptide</keyword>
<keyword id="KW-0044">Antibiotic</keyword>
<keyword id="KW-0929">Antimicrobial</keyword>
<keyword id="KW-0165">Cleavage on pair of basic residues</keyword>
<keyword id="KW-0204">Cytolysis</keyword>
<keyword id="KW-0295">Fungicide</keyword>
<keyword id="KW-0354">Hemolysis</keyword>
<keyword id="KW-0964">Secreted</keyword>
<keyword id="KW-0732">Signal</keyword>
<comment type="function">
    <molecule>Maximin-6</molecule>
    <text evidence="1">Shows antimicrobial activity against bacteria and against the fungus C.albicans. It has little hemolytic activity (By similarity).</text>
</comment>
<comment type="function">
    <molecule>Maximin-Hv</molecule>
    <text evidence="1">Shows antimicrobial activity against bacteria and against the fungus C.albicans. Shows strong hemolytic activity (By similarity).</text>
</comment>
<comment type="subcellular location">
    <subcellularLocation>
        <location>Secreted</location>
    </subcellularLocation>
</comment>
<comment type="tissue specificity">
    <text>Expressed by the skin glands.</text>
</comment>
<comment type="similarity">
    <text evidence="3">Belongs to the bombinin family.</text>
</comment>
<accession>Q58T89</accession>
<dbReference type="EMBL" id="AY847755">
    <property type="protein sequence ID" value="AAX50249.1"/>
    <property type="molecule type" value="Genomic_DNA"/>
</dbReference>
<dbReference type="SMR" id="Q58T89"/>
<dbReference type="GO" id="GO:0005576">
    <property type="term" value="C:extracellular region"/>
    <property type="evidence" value="ECO:0007669"/>
    <property type="project" value="UniProtKB-SubCell"/>
</dbReference>
<dbReference type="GO" id="GO:0042742">
    <property type="term" value="P:defense response to bacterium"/>
    <property type="evidence" value="ECO:0007669"/>
    <property type="project" value="UniProtKB-KW"/>
</dbReference>
<dbReference type="GO" id="GO:0050832">
    <property type="term" value="P:defense response to fungus"/>
    <property type="evidence" value="ECO:0007669"/>
    <property type="project" value="UniProtKB-KW"/>
</dbReference>
<dbReference type="GO" id="GO:0031640">
    <property type="term" value="P:killing of cells of another organism"/>
    <property type="evidence" value="ECO:0007669"/>
    <property type="project" value="UniProtKB-KW"/>
</dbReference>
<dbReference type="InterPro" id="IPR007962">
    <property type="entry name" value="Bombinin"/>
</dbReference>
<dbReference type="Pfam" id="PF05298">
    <property type="entry name" value="Bombinin"/>
    <property type="match status" value="1"/>
</dbReference>
<protein>
    <recommendedName>
        <fullName>Maximins 6/Hv</fullName>
    </recommendedName>
    <component>
        <recommendedName>
            <fullName>Maximin-6</fullName>
        </recommendedName>
    </component>
    <component>
        <recommendedName>
            <fullName>Maximin-Hv</fullName>
        </recommendedName>
    </component>
</protein>